<gene>
    <name evidence="1" type="primary">tsaD</name>
    <name type="synonym">gcp</name>
    <name type="ordered locus">Smlt0445</name>
</gene>
<reference key="1">
    <citation type="journal article" date="2008" name="Genome Biol.">
        <title>The complete genome, comparative and functional analysis of Stenotrophomonas maltophilia reveals an organism heavily shielded by drug resistance determinants.</title>
        <authorList>
            <person name="Crossman L.C."/>
            <person name="Gould V.C."/>
            <person name="Dow J.M."/>
            <person name="Vernikos G.S."/>
            <person name="Okazaki A."/>
            <person name="Sebaihia M."/>
            <person name="Saunders D."/>
            <person name="Arrowsmith C."/>
            <person name="Carver T."/>
            <person name="Peters N."/>
            <person name="Adlem E."/>
            <person name="Kerhornou A."/>
            <person name="Lord A."/>
            <person name="Murphy L."/>
            <person name="Seeger K."/>
            <person name="Squares R."/>
            <person name="Rutter S."/>
            <person name="Quail M.A."/>
            <person name="Rajandream M.A."/>
            <person name="Harris D."/>
            <person name="Churcher C."/>
            <person name="Bentley S.D."/>
            <person name="Parkhill J."/>
            <person name="Thomson N.R."/>
            <person name="Avison M.B."/>
        </authorList>
    </citation>
    <scope>NUCLEOTIDE SEQUENCE [LARGE SCALE GENOMIC DNA]</scope>
    <source>
        <strain>K279a</strain>
    </source>
</reference>
<proteinExistence type="inferred from homology"/>
<accession>B2FK06</accession>
<keyword id="KW-0012">Acyltransferase</keyword>
<keyword id="KW-0963">Cytoplasm</keyword>
<keyword id="KW-0408">Iron</keyword>
<keyword id="KW-0479">Metal-binding</keyword>
<keyword id="KW-1185">Reference proteome</keyword>
<keyword id="KW-0808">Transferase</keyword>
<keyword id="KW-0819">tRNA processing</keyword>
<evidence type="ECO:0000255" key="1">
    <source>
        <dbReference type="HAMAP-Rule" id="MF_01445"/>
    </source>
</evidence>
<name>TSAD_STRMK</name>
<organism>
    <name type="scientific">Stenotrophomonas maltophilia (strain K279a)</name>
    <dbReference type="NCBI Taxonomy" id="522373"/>
    <lineage>
        <taxon>Bacteria</taxon>
        <taxon>Pseudomonadati</taxon>
        <taxon>Pseudomonadota</taxon>
        <taxon>Gammaproteobacteria</taxon>
        <taxon>Lysobacterales</taxon>
        <taxon>Lysobacteraceae</taxon>
        <taxon>Stenotrophomonas</taxon>
        <taxon>Stenotrophomonas maltophilia group</taxon>
    </lineage>
</organism>
<sequence>MRVLGIESSCDETGVAVYDTGLSGSAALRAHAVYSQIALHAEYGGVVPELASRDHVRKLLPLVRQTLAEAGLGVGDIDGVAYTAGPGLVGALLVGAGVARSLAWALEVPAVGVHHMEGHLLAPLMEDDPPEAPFVALLVSGGHTQLVAVDAIGQYRLLGETLDDAAGEAFDKTAKLMGLPYPGGPQLARLAEQGTPGAYRFARPMTDRPGLDFSFSGLKTQVLMAWRDSDQSEQTRADIARGFEDAVVETLSIKCERALEAAGTNVIVVAGGVGANKRLRARLQQMAERLGGRACFPRPALCTDNGAMIAFAGALRLQAGQYSPPKVDVTPRWDMATLPAV</sequence>
<feature type="chain" id="PRO_1000146027" description="tRNA N6-adenosine threonylcarbamoyltransferase">
    <location>
        <begin position="1"/>
        <end position="341"/>
    </location>
</feature>
<feature type="binding site" evidence="1">
    <location>
        <position position="115"/>
    </location>
    <ligand>
        <name>Fe cation</name>
        <dbReference type="ChEBI" id="CHEBI:24875"/>
    </ligand>
</feature>
<feature type="binding site" evidence="1">
    <location>
        <position position="119"/>
    </location>
    <ligand>
        <name>Fe cation</name>
        <dbReference type="ChEBI" id="CHEBI:24875"/>
    </ligand>
</feature>
<feature type="binding site" evidence="1">
    <location>
        <begin position="138"/>
        <end position="142"/>
    </location>
    <ligand>
        <name>substrate</name>
    </ligand>
</feature>
<feature type="binding site" evidence="1">
    <location>
        <position position="171"/>
    </location>
    <ligand>
        <name>substrate</name>
    </ligand>
</feature>
<feature type="binding site" evidence="1">
    <location>
        <position position="184"/>
    </location>
    <ligand>
        <name>substrate</name>
    </ligand>
</feature>
<feature type="binding site" evidence="1">
    <location>
        <position position="276"/>
    </location>
    <ligand>
        <name>substrate</name>
    </ligand>
</feature>
<feature type="binding site" evidence="1">
    <location>
        <position position="304"/>
    </location>
    <ligand>
        <name>Fe cation</name>
        <dbReference type="ChEBI" id="CHEBI:24875"/>
    </ligand>
</feature>
<comment type="function">
    <text evidence="1">Required for the formation of a threonylcarbamoyl group on adenosine at position 37 (t(6)A37) in tRNAs that read codons beginning with adenine. Is involved in the transfer of the threonylcarbamoyl moiety of threonylcarbamoyl-AMP (TC-AMP) to the N6 group of A37, together with TsaE and TsaB. TsaD likely plays a direct catalytic role in this reaction.</text>
</comment>
<comment type="catalytic activity">
    <reaction evidence="1">
        <text>L-threonylcarbamoyladenylate + adenosine(37) in tRNA = N(6)-L-threonylcarbamoyladenosine(37) in tRNA + AMP + H(+)</text>
        <dbReference type="Rhea" id="RHEA:37059"/>
        <dbReference type="Rhea" id="RHEA-COMP:10162"/>
        <dbReference type="Rhea" id="RHEA-COMP:10163"/>
        <dbReference type="ChEBI" id="CHEBI:15378"/>
        <dbReference type="ChEBI" id="CHEBI:73682"/>
        <dbReference type="ChEBI" id="CHEBI:74411"/>
        <dbReference type="ChEBI" id="CHEBI:74418"/>
        <dbReference type="ChEBI" id="CHEBI:456215"/>
        <dbReference type="EC" id="2.3.1.234"/>
    </reaction>
</comment>
<comment type="cofactor">
    <cofactor evidence="1">
        <name>Fe(2+)</name>
        <dbReference type="ChEBI" id="CHEBI:29033"/>
    </cofactor>
    <text evidence="1">Binds 1 Fe(2+) ion per subunit.</text>
</comment>
<comment type="subcellular location">
    <subcellularLocation>
        <location evidence="1">Cytoplasm</location>
    </subcellularLocation>
</comment>
<comment type="similarity">
    <text evidence="1">Belongs to the KAE1 / TsaD family.</text>
</comment>
<dbReference type="EC" id="2.3.1.234" evidence="1"/>
<dbReference type="EMBL" id="AM743169">
    <property type="protein sequence ID" value="CAQ44043.1"/>
    <property type="molecule type" value="Genomic_DNA"/>
</dbReference>
<dbReference type="RefSeq" id="WP_012478942.1">
    <property type="nucleotide sequence ID" value="NC_010943.1"/>
</dbReference>
<dbReference type="SMR" id="B2FK06"/>
<dbReference type="EnsemblBacteria" id="CAQ44043">
    <property type="protein sequence ID" value="CAQ44043"/>
    <property type="gene ID" value="Smlt0445"/>
</dbReference>
<dbReference type="KEGG" id="sml:Smlt0445"/>
<dbReference type="PATRIC" id="fig|522373.3.peg.421"/>
<dbReference type="eggNOG" id="COG0533">
    <property type="taxonomic scope" value="Bacteria"/>
</dbReference>
<dbReference type="HOGENOM" id="CLU_023208_0_0_6"/>
<dbReference type="Proteomes" id="UP000008840">
    <property type="component" value="Chromosome"/>
</dbReference>
<dbReference type="GO" id="GO:0005737">
    <property type="term" value="C:cytoplasm"/>
    <property type="evidence" value="ECO:0007669"/>
    <property type="project" value="UniProtKB-SubCell"/>
</dbReference>
<dbReference type="GO" id="GO:0005506">
    <property type="term" value="F:iron ion binding"/>
    <property type="evidence" value="ECO:0007669"/>
    <property type="project" value="UniProtKB-UniRule"/>
</dbReference>
<dbReference type="GO" id="GO:0061711">
    <property type="term" value="F:N(6)-L-threonylcarbamoyladenine synthase activity"/>
    <property type="evidence" value="ECO:0007669"/>
    <property type="project" value="UniProtKB-EC"/>
</dbReference>
<dbReference type="GO" id="GO:0002949">
    <property type="term" value="P:tRNA threonylcarbamoyladenosine modification"/>
    <property type="evidence" value="ECO:0007669"/>
    <property type="project" value="UniProtKB-UniRule"/>
</dbReference>
<dbReference type="CDD" id="cd24133">
    <property type="entry name" value="ASKHA_NBD_TsaD_bac"/>
    <property type="match status" value="1"/>
</dbReference>
<dbReference type="FunFam" id="3.30.420.40:FF:000031">
    <property type="entry name" value="tRNA N6-adenosine threonylcarbamoyltransferase"/>
    <property type="match status" value="1"/>
</dbReference>
<dbReference type="Gene3D" id="3.30.420.40">
    <property type="match status" value="2"/>
</dbReference>
<dbReference type="HAMAP" id="MF_01445">
    <property type="entry name" value="TsaD"/>
    <property type="match status" value="1"/>
</dbReference>
<dbReference type="InterPro" id="IPR043129">
    <property type="entry name" value="ATPase_NBD"/>
</dbReference>
<dbReference type="InterPro" id="IPR000905">
    <property type="entry name" value="Gcp-like_dom"/>
</dbReference>
<dbReference type="InterPro" id="IPR017861">
    <property type="entry name" value="KAE1/TsaD"/>
</dbReference>
<dbReference type="InterPro" id="IPR022450">
    <property type="entry name" value="TsaD"/>
</dbReference>
<dbReference type="NCBIfam" id="TIGR00329">
    <property type="entry name" value="gcp_kae1"/>
    <property type="match status" value="1"/>
</dbReference>
<dbReference type="NCBIfam" id="TIGR03723">
    <property type="entry name" value="T6A_TsaD_YgjD"/>
    <property type="match status" value="1"/>
</dbReference>
<dbReference type="PANTHER" id="PTHR11735">
    <property type="entry name" value="TRNA N6-ADENOSINE THREONYLCARBAMOYLTRANSFERASE"/>
    <property type="match status" value="1"/>
</dbReference>
<dbReference type="PANTHER" id="PTHR11735:SF6">
    <property type="entry name" value="TRNA N6-ADENOSINE THREONYLCARBAMOYLTRANSFERASE, MITOCHONDRIAL"/>
    <property type="match status" value="1"/>
</dbReference>
<dbReference type="Pfam" id="PF00814">
    <property type="entry name" value="TsaD"/>
    <property type="match status" value="1"/>
</dbReference>
<dbReference type="PRINTS" id="PR00789">
    <property type="entry name" value="OSIALOPTASE"/>
</dbReference>
<dbReference type="SUPFAM" id="SSF53067">
    <property type="entry name" value="Actin-like ATPase domain"/>
    <property type="match status" value="2"/>
</dbReference>
<protein>
    <recommendedName>
        <fullName evidence="1">tRNA N6-adenosine threonylcarbamoyltransferase</fullName>
        <ecNumber evidence="1">2.3.1.234</ecNumber>
    </recommendedName>
    <alternativeName>
        <fullName evidence="1">N6-L-threonylcarbamoyladenine synthase</fullName>
        <shortName evidence="1">t(6)A synthase</shortName>
    </alternativeName>
    <alternativeName>
        <fullName evidence="1">t(6)A37 threonylcarbamoyladenosine biosynthesis protein TsaD</fullName>
    </alternativeName>
    <alternativeName>
        <fullName evidence="1">tRNA threonylcarbamoyladenosine biosynthesis protein TsaD</fullName>
    </alternativeName>
</protein>